<evidence type="ECO:0000250" key="1"/>
<evidence type="ECO:0000255" key="2"/>
<evidence type="ECO:0000269" key="3">
    <source>
    </source>
</evidence>
<evidence type="ECO:0000269" key="4">
    <source>
    </source>
</evidence>
<evidence type="ECO:0000305" key="5"/>
<evidence type="ECO:0007829" key="6">
    <source>
        <dbReference type="PDB" id="2ATM"/>
    </source>
</evidence>
<comment type="function">
    <text evidence="1">Hydrolyzes high molecular weight hyaluronic acid to produce small oligosaccharides.</text>
</comment>
<comment type="catalytic activity">
    <reaction evidence="4">
        <text>Random hydrolysis of (1-&gt;4)-linkages between N-acetyl-beta-D-glucosamine and D-glucuronate residues in hyaluronate.</text>
        <dbReference type="EC" id="3.2.1.35"/>
    </reaction>
</comment>
<comment type="subcellular location">
    <subcellularLocation>
        <location>Secreted</location>
    </subcellularLocation>
</comment>
<comment type="tissue specificity">
    <text>Expressed by the venom gland.</text>
</comment>
<comment type="allergen">
    <text>Causes an allergic reaction in human.</text>
</comment>
<comment type="similarity">
    <text evidence="5">Belongs to the glycosyl hydrolase 56 family.</text>
</comment>
<name>HUGAA_VESVU</name>
<dbReference type="EC" id="3.2.1.35"/>
<dbReference type="EMBL" id="L43562">
    <property type="protein sequence ID" value="AAB48073.1"/>
    <property type="molecule type" value="mRNA"/>
</dbReference>
<dbReference type="PDB" id="2ATM">
    <property type="method" value="X-ray"/>
    <property type="resolution" value="2.00 A"/>
    <property type="chains" value="A=1-331"/>
</dbReference>
<dbReference type="PDBsum" id="2ATM"/>
<dbReference type="SMR" id="P49370"/>
<dbReference type="Allergome" id="3521">
    <property type="allergen name" value="Ves v 2.0101"/>
</dbReference>
<dbReference type="Allergome" id="669">
    <property type="allergen name" value="Ves v 2"/>
</dbReference>
<dbReference type="CAZy" id="GH56">
    <property type="family name" value="Glycoside Hydrolase Family 56"/>
</dbReference>
<dbReference type="iPTMnet" id="P49370"/>
<dbReference type="EvolutionaryTrace" id="P49370"/>
<dbReference type="GO" id="GO:0005576">
    <property type="term" value="C:extracellular region"/>
    <property type="evidence" value="ECO:0007669"/>
    <property type="project" value="UniProtKB-SubCell"/>
</dbReference>
<dbReference type="GO" id="GO:0004415">
    <property type="term" value="F:hyalurononglucosaminidase activity"/>
    <property type="evidence" value="ECO:0007669"/>
    <property type="project" value="UniProtKB-EC"/>
</dbReference>
<dbReference type="GO" id="GO:0005975">
    <property type="term" value="P:carbohydrate metabolic process"/>
    <property type="evidence" value="ECO:0007669"/>
    <property type="project" value="InterPro"/>
</dbReference>
<dbReference type="GO" id="GO:0006952">
    <property type="term" value="P:defense response"/>
    <property type="evidence" value="ECO:0007669"/>
    <property type="project" value="InterPro"/>
</dbReference>
<dbReference type="GO" id="GO:0030214">
    <property type="term" value="P:hyaluronan catabolic process"/>
    <property type="evidence" value="ECO:0007669"/>
    <property type="project" value="TreeGrafter"/>
</dbReference>
<dbReference type="Gene3D" id="3.20.20.70">
    <property type="entry name" value="Aldolase class I"/>
    <property type="match status" value="1"/>
</dbReference>
<dbReference type="InterPro" id="IPR013785">
    <property type="entry name" value="Aldolase_TIM"/>
</dbReference>
<dbReference type="InterPro" id="IPR017853">
    <property type="entry name" value="Glycoside_hydrolase_SF"/>
</dbReference>
<dbReference type="InterPro" id="IPR018155">
    <property type="entry name" value="Hyaluronidase"/>
</dbReference>
<dbReference type="InterPro" id="IPR001329">
    <property type="entry name" value="Venom_Hyaluronidase"/>
</dbReference>
<dbReference type="PANTHER" id="PTHR11769">
    <property type="entry name" value="HYALURONIDASE"/>
    <property type="match status" value="1"/>
</dbReference>
<dbReference type="PANTHER" id="PTHR11769:SF35">
    <property type="entry name" value="HYALURONIDASE"/>
    <property type="match status" value="1"/>
</dbReference>
<dbReference type="Pfam" id="PF01630">
    <property type="entry name" value="Glyco_hydro_56"/>
    <property type="match status" value="1"/>
</dbReference>
<dbReference type="PIRSF" id="PIRSF038193">
    <property type="entry name" value="Hyaluronidase"/>
    <property type="match status" value="1"/>
</dbReference>
<dbReference type="PRINTS" id="PR00846">
    <property type="entry name" value="GLHYDRLASE56"/>
</dbReference>
<dbReference type="PRINTS" id="PR00847">
    <property type="entry name" value="HYALURONDASE"/>
</dbReference>
<dbReference type="SUPFAM" id="SSF51445">
    <property type="entry name" value="(Trans)glycosidases"/>
    <property type="match status" value="1"/>
</dbReference>
<sequence length="331" mass="38933">SERPKRVFNIYWNVPTFMCHQYDLYFDEVTNFNIKRNSKDDFQGDKIAIFYDPGEFPALLSLKDGKYKKRNGGVPQEGNITIHLQKFIENLDKIYPNRNFSGIGVIDFERWRPIFRQNWGNMKIHKNFSIDLVRNEHPTWNKKMIELEASKRFEKYARFFMEETLKLAKKTRKQADWGYYGYPYCFNMSPNNLVPECDVTAMHENDKMSWLFNNQNVLLPSVYVRQELTPDQRIGLVQGRVKEAVRISNNLKHSPKVLSYWWYVYQDETNTFLTETDVKKTFQEIVINGGDGIIIWGSSSDVNSLSKCKRLQDYLLTVLGPIAINVTEAVN</sequence>
<keyword id="KW-0002">3D-structure</keyword>
<keyword id="KW-0020">Allergen</keyword>
<keyword id="KW-0903">Direct protein sequencing</keyword>
<keyword id="KW-1015">Disulfide bond</keyword>
<keyword id="KW-0325">Glycoprotein</keyword>
<keyword id="KW-0326">Glycosidase</keyword>
<keyword id="KW-0378">Hydrolase</keyword>
<keyword id="KW-0964">Secreted</keyword>
<accession>P49370</accession>
<feature type="chain" id="PRO_0000191286" description="Hyaluronidase A">
    <location>
        <begin position="1"/>
        <end position="331"/>
    </location>
</feature>
<feature type="active site" description="Proton donor" evidence="5">
    <location>
        <position position="109"/>
    </location>
</feature>
<feature type="glycosylation site" description="N-linked (GlcNAc...) asparagine" evidence="3">
    <location>
        <position position="79"/>
    </location>
</feature>
<feature type="glycosylation site" description="N-linked (GlcNAc...) asparagine" evidence="3">
    <location>
        <position position="99"/>
    </location>
</feature>
<feature type="glycosylation site" description="N-linked (GlcNAc...) asparagine" evidence="3">
    <location>
        <position position="127"/>
    </location>
</feature>
<feature type="glycosylation site" description="N-linked (GlcNAc...) asparagine" evidence="2">
    <location>
        <position position="325"/>
    </location>
</feature>
<feature type="disulfide bond" evidence="3">
    <location>
        <begin position="19"/>
        <end position="308"/>
    </location>
</feature>
<feature type="disulfide bond" evidence="3">
    <location>
        <begin position="185"/>
        <end position="197"/>
    </location>
</feature>
<feature type="sequence conflict" description="In Ref. 1; AA sequence." evidence="5" ref="1">
    <original>S</original>
    <variation>T</variation>
    <location>
        <position position="1"/>
    </location>
</feature>
<feature type="strand" evidence="6">
    <location>
        <begin position="9"/>
        <end position="13"/>
    </location>
</feature>
<feature type="helix" evidence="6">
    <location>
        <begin position="16"/>
        <end position="22"/>
    </location>
</feature>
<feature type="helix" evidence="6">
    <location>
        <begin position="29"/>
        <end position="32"/>
    </location>
</feature>
<feature type="helix" evidence="6">
    <location>
        <begin position="38"/>
        <end position="40"/>
    </location>
</feature>
<feature type="strand" evidence="6">
    <location>
        <begin position="45"/>
        <end position="52"/>
    </location>
</feature>
<feature type="strand" evidence="6">
    <location>
        <begin position="58"/>
        <end position="61"/>
    </location>
</feature>
<feature type="strand" evidence="6">
    <location>
        <begin position="63"/>
        <end position="65"/>
    </location>
</feature>
<feature type="strand" evidence="6">
    <location>
        <begin position="67"/>
        <end position="70"/>
    </location>
</feature>
<feature type="helix" evidence="6">
    <location>
        <begin position="75"/>
        <end position="77"/>
    </location>
</feature>
<feature type="helix" evidence="6">
    <location>
        <begin position="80"/>
        <end position="94"/>
    </location>
</feature>
<feature type="strand" evidence="6">
    <location>
        <begin position="102"/>
        <end position="107"/>
    </location>
</feature>
<feature type="helix" evidence="6">
    <location>
        <begin position="115"/>
        <end position="117"/>
    </location>
</feature>
<feature type="helix" evidence="6">
    <location>
        <begin position="120"/>
        <end position="123"/>
    </location>
</feature>
<feature type="helix" evidence="6">
    <location>
        <begin position="124"/>
        <end position="136"/>
    </location>
</feature>
<feature type="helix" evidence="6">
    <location>
        <begin position="142"/>
        <end position="171"/>
    </location>
</feature>
<feature type="strand" evidence="6">
    <location>
        <begin position="175"/>
        <end position="180"/>
    </location>
</feature>
<feature type="strand" evidence="6">
    <location>
        <begin position="194"/>
        <end position="196"/>
    </location>
</feature>
<feature type="helix" evidence="6">
    <location>
        <begin position="199"/>
        <end position="206"/>
    </location>
</feature>
<feature type="helix" evidence="6">
    <location>
        <begin position="209"/>
        <end position="212"/>
    </location>
</feature>
<feature type="strand" evidence="6">
    <location>
        <begin position="216"/>
        <end position="219"/>
    </location>
</feature>
<feature type="helix" evidence="6">
    <location>
        <begin position="230"/>
        <end position="250"/>
    </location>
</feature>
<feature type="strand" evidence="6">
    <location>
        <begin position="251"/>
        <end position="253"/>
    </location>
</feature>
<feature type="strand" evidence="6">
    <location>
        <begin position="256"/>
        <end position="265"/>
    </location>
</feature>
<feature type="strand" evidence="6">
    <location>
        <begin position="268"/>
        <end position="272"/>
    </location>
</feature>
<feature type="helix" evidence="6">
    <location>
        <begin position="275"/>
        <end position="287"/>
    </location>
</feature>
<feature type="strand" evidence="6">
    <location>
        <begin position="292"/>
        <end position="296"/>
    </location>
</feature>
<feature type="helix" evidence="6">
    <location>
        <begin position="299"/>
        <end position="302"/>
    </location>
</feature>
<feature type="helix" evidence="6">
    <location>
        <begin position="305"/>
        <end position="317"/>
    </location>
</feature>
<feature type="helix" evidence="6">
    <location>
        <begin position="319"/>
        <end position="328"/>
    </location>
</feature>
<protein>
    <recommendedName>
        <fullName>Hyaluronidase A</fullName>
        <shortName>Hya A</shortName>
        <ecNumber>3.2.1.35</ecNumber>
    </recommendedName>
    <alternativeName>
        <fullName>Allergen Ves v II</fullName>
    </alternativeName>
    <alternativeName>
        <fullName>Hyaluronoglucosaminidase A</fullName>
    </alternativeName>
    <allergenName>Ves v 2a</allergenName>
</protein>
<proteinExistence type="evidence at protein level"/>
<reference key="1">
    <citation type="journal article" date="1996" name="J. Allergy Clin. Immunol.">
        <title>Yellow jacket venom allergens, hyaluronidase and phospholipase: sequence similarity and antigenic cross-reactivity with their hornet and wasp homologs and possible implications for clinical allergy.</title>
        <authorList>
            <person name="King T.P."/>
            <person name="Lu G."/>
            <person name="Gonzalez M."/>
            <person name="Qian N."/>
            <person name="Soldatova L."/>
        </authorList>
    </citation>
    <scope>NUCLEOTIDE SEQUENCE [MRNA]</scope>
    <scope>PROTEIN SEQUENCE OF 1-13; 205-224 AND 260-268</scope>
    <source>
        <tissue>Venom</tissue>
        <tissue>Venom gland</tissue>
    </source>
</reference>
<reference key="2">
    <citation type="journal article" date="2010" name="Mol. Immunol.">
        <title>Dissecting cross-reactivity in hymenoptera venom allergy by circumvention of alpha-1,3-core fucosylation.</title>
        <authorList>
            <person name="Seismann H."/>
            <person name="Blank S."/>
            <person name="Braren I."/>
            <person name="Greunke K."/>
            <person name="Cifuentes L."/>
            <person name="Grunwald T."/>
            <person name="Bredehorst R."/>
            <person name="Ollert M."/>
            <person name="Spillner E."/>
        </authorList>
    </citation>
    <scope>CATALYTIC ACTIVITY</scope>
</reference>
<reference key="3">
    <citation type="journal article" date="2006" name="Acta Crystallogr. D">
        <title>Structure of recombinant Ves v 2 at 2.0 Angstrom resolution: structural analysis of an allergenic hyaluronidase from wasp venom.</title>
        <authorList>
            <person name="Skov L.K."/>
            <person name="Seppaelae U."/>
            <person name="Coen J.J.F."/>
            <person name="Crickmore N."/>
            <person name="King T.P."/>
            <person name="Monsalve R."/>
            <person name="Kastrup J.S."/>
            <person name="Spangfort M.D."/>
            <person name="Gajhede M."/>
        </authorList>
    </citation>
    <scope>X-RAY CRYSTALLOGRAPHY (2.0 ANGSTROMS) OF 1-331</scope>
    <scope>PARTIAL PROTEIN SEQUENCE</scope>
    <scope>IDENTIFICATION BY MASS SPECTROMETRY</scope>
    <scope>GLYCOSYLATION AT ASN-79; ASN-99 AND ASN-127</scope>
    <scope>DISULFIDE BONDS</scope>
</reference>
<organism>
    <name type="scientific">Vespula vulgaris</name>
    <name type="common">Yellow jacket</name>
    <name type="synonym">Wasp</name>
    <dbReference type="NCBI Taxonomy" id="7454"/>
    <lineage>
        <taxon>Eukaryota</taxon>
        <taxon>Metazoa</taxon>
        <taxon>Ecdysozoa</taxon>
        <taxon>Arthropoda</taxon>
        <taxon>Hexapoda</taxon>
        <taxon>Insecta</taxon>
        <taxon>Pterygota</taxon>
        <taxon>Neoptera</taxon>
        <taxon>Endopterygota</taxon>
        <taxon>Hymenoptera</taxon>
        <taxon>Apocrita</taxon>
        <taxon>Aculeata</taxon>
        <taxon>Vespoidea</taxon>
        <taxon>Vespidae</taxon>
        <taxon>Vespinae</taxon>
        <taxon>Vespula</taxon>
    </lineage>
</organism>